<accession>P86929</accession>
<sequence length="73" mass="8505">MLLTISDFLFLSLTFSRYARMRDSRPWSDRKNNYSGPQFTYPPEKAPPEKLIKWNNEGSPIFEMPAEGGHIEP</sequence>
<reference evidence="4" key="1">
    <citation type="journal article" date="2011" name="Peptides">
        <title>A novel antimicrobial peptide from skin secretions of the earthworm, Pheretima guillelmi (Michaelsen).</title>
        <authorList>
            <person name="Li W."/>
            <person name="Li S."/>
            <person name="Zhong J."/>
            <person name="Zhu Z."/>
            <person name="Liu J."/>
            <person name="Wang W."/>
        </authorList>
    </citation>
    <scope>NUCLEOTIDE SEQUENCE [MRNA]</scope>
    <scope>PROTEIN SEQUENCE OF 15-40 AND 55-73</scope>
    <scope>FUNCTION</scope>
    <scope>SUBCELLULAR LOCATION</scope>
    <scope>MASS SPECTROMETRY</scope>
    <source>
        <tissue evidence="2">Skin</tissue>
        <tissue evidence="2">Skin secretion</tissue>
    </source>
</reference>
<name>LMBPG_METGU</name>
<dbReference type="GO" id="GO:0005576">
    <property type="term" value="C:extracellular region"/>
    <property type="evidence" value="ECO:0007669"/>
    <property type="project" value="UniProtKB-SubCell"/>
</dbReference>
<dbReference type="GO" id="GO:0042742">
    <property type="term" value="P:defense response to bacterium"/>
    <property type="evidence" value="ECO:0007669"/>
    <property type="project" value="UniProtKB-KW"/>
</dbReference>
<dbReference type="GO" id="GO:0050832">
    <property type="term" value="P:defense response to fungus"/>
    <property type="evidence" value="ECO:0007669"/>
    <property type="project" value="UniProtKB-KW"/>
</dbReference>
<dbReference type="GO" id="GO:0031640">
    <property type="term" value="P:killing of cells of another organism"/>
    <property type="evidence" value="ECO:0007669"/>
    <property type="project" value="UniProtKB-KW"/>
</dbReference>
<protein>
    <recommendedName>
        <fullName>Antimicrobial peptide lumbricin-PG</fullName>
    </recommendedName>
    <alternativeName>
        <fullName evidence="3">Lumbricin-PG</fullName>
    </alternativeName>
</protein>
<organism>
    <name type="scientific">Metaphire guillelmi</name>
    <name type="common">Earthworm</name>
    <name type="synonym">Pheretima guillelmi</name>
    <dbReference type="NCBI Taxonomy" id="437222"/>
    <lineage>
        <taxon>Eukaryota</taxon>
        <taxon>Metazoa</taxon>
        <taxon>Spiralia</taxon>
        <taxon>Lophotrochozoa</taxon>
        <taxon>Annelida</taxon>
        <taxon>Clitellata</taxon>
        <taxon>Oligochaeta</taxon>
        <taxon>Crassiclitellata</taxon>
        <taxon>Megascolecida</taxon>
        <taxon>Megascolecidae</taxon>
        <taxon>Metaphire</taxon>
    </lineage>
</organism>
<comment type="function">
    <text evidence="2">Displays antimicrobial activity against the Gram-positive bacterium S.aureus ATCC 2592, the Gram-negative bacteria E.coli ATCC 25922 and P.aeruginosa ATCC 27853, and the fungus C.albicans ATCC 2002. Displays stronger activity against P.aeruginosa and S.aureus than E.coli. Displays very weak hemolytic activity.</text>
</comment>
<comment type="subcellular location">
    <subcellularLocation>
        <location evidence="2">Secreted</location>
    </subcellularLocation>
</comment>
<comment type="mass spectrometry" mass="6909.07" method="MALDI" evidence="2"/>
<proteinExistence type="evidence at protein level"/>
<evidence type="ECO:0000256" key="1">
    <source>
        <dbReference type="SAM" id="MobiDB-lite"/>
    </source>
</evidence>
<evidence type="ECO:0000269" key="2">
    <source>
    </source>
</evidence>
<evidence type="ECO:0000303" key="3">
    <source>
    </source>
</evidence>
<evidence type="ECO:0000305" key="4"/>
<keyword id="KW-0044">Antibiotic</keyword>
<keyword id="KW-0929">Antimicrobial</keyword>
<keyword id="KW-0204">Cytolysis</keyword>
<keyword id="KW-0903">Direct protein sequencing</keyword>
<keyword id="KW-0295">Fungicide</keyword>
<keyword id="KW-0354">Hemolysis</keyword>
<keyword id="KW-0964">Secreted</keyword>
<keyword id="KW-0732">Signal</keyword>
<feature type="signal peptide" evidence="2">
    <location>
        <begin position="1"/>
        <end position="14"/>
    </location>
</feature>
<feature type="peptide" id="PRO_0000413068" description="Antimicrobial peptide lumbricin-PG">
    <location>
        <begin position="15"/>
        <end position="73"/>
    </location>
</feature>
<feature type="region of interest" description="Disordered" evidence="1">
    <location>
        <begin position="25"/>
        <end position="48"/>
    </location>
</feature>